<dbReference type="EC" id="3.1.1.29" evidence="1"/>
<dbReference type="EMBL" id="AP008229">
    <property type="protein sequence ID" value="BAE70158.1"/>
    <property type="molecule type" value="Genomic_DNA"/>
</dbReference>
<dbReference type="RefSeq" id="WP_011260042.1">
    <property type="nucleotide sequence ID" value="NC_007705.1"/>
</dbReference>
<dbReference type="SMR" id="Q2NZW9"/>
<dbReference type="KEGG" id="xom:XOO3403"/>
<dbReference type="HOGENOM" id="CLU_062456_3_1_6"/>
<dbReference type="GO" id="GO:0005737">
    <property type="term" value="C:cytoplasm"/>
    <property type="evidence" value="ECO:0007669"/>
    <property type="project" value="UniProtKB-SubCell"/>
</dbReference>
<dbReference type="GO" id="GO:0004045">
    <property type="term" value="F:peptidyl-tRNA hydrolase activity"/>
    <property type="evidence" value="ECO:0007669"/>
    <property type="project" value="UniProtKB-UniRule"/>
</dbReference>
<dbReference type="GO" id="GO:0000049">
    <property type="term" value="F:tRNA binding"/>
    <property type="evidence" value="ECO:0007669"/>
    <property type="project" value="UniProtKB-UniRule"/>
</dbReference>
<dbReference type="GO" id="GO:0006515">
    <property type="term" value="P:protein quality control for misfolded or incompletely synthesized proteins"/>
    <property type="evidence" value="ECO:0007669"/>
    <property type="project" value="UniProtKB-UniRule"/>
</dbReference>
<dbReference type="GO" id="GO:0072344">
    <property type="term" value="P:rescue of stalled ribosome"/>
    <property type="evidence" value="ECO:0007669"/>
    <property type="project" value="UniProtKB-UniRule"/>
</dbReference>
<dbReference type="CDD" id="cd00462">
    <property type="entry name" value="PTH"/>
    <property type="match status" value="1"/>
</dbReference>
<dbReference type="FunFam" id="3.40.50.1470:FF:000001">
    <property type="entry name" value="Peptidyl-tRNA hydrolase"/>
    <property type="match status" value="1"/>
</dbReference>
<dbReference type="Gene3D" id="3.40.50.1470">
    <property type="entry name" value="Peptidyl-tRNA hydrolase"/>
    <property type="match status" value="1"/>
</dbReference>
<dbReference type="HAMAP" id="MF_00083">
    <property type="entry name" value="Pept_tRNA_hydro_bact"/>
    <property type="match status" value="1"/>
</dbReference>
<dbReference type="InterPro" id="IPR001328">
    <property type="entry name" value="Pept_tRNA_hydro"/>
</dbReference>
<dbReference type="InterPro" id="IPR018171">
    <property type="entry name" value="Pept_tRNA_hydro_CS"/>
</dbReference>
<dbReference type="InterPro" id="IPR036416">
    <property type="entry name" value="Pept_tRNA_hydro_sf"/>
</dbReference>
<dbReference type="NCBIfam" id="TIGR00447">
    <property type="entry name" value="pth"/>
    <property type="match status" value="1"/>
</dbReference>
<dbReference type="PANTHER" id="PTHR17224">
    <property type="entry name" value="PEPTIDYL-TRNA HYDROLASE"/>
    <property type="match status" value="1"/>
</dbReference>
<dbReference type="PANTHER" id="PTHR17224:SF1">
    <property type="entry name" value="PEPTIDYL-TRNA HYDROLASE"/>
    <property type="match status" value="1"/>
</dbReference>
<dbReference type="Pfam" id="PF01195">
    <property type="entry name" value="Pept_tRNA_hydro"/>
    <property type="match status" value="1"/>
</dbReference>
<dbReference type="SUPFAM" id="SSF53178">
    <property type="entry name" value="Peptidyl-tRNA hydrolase-like"/>
    <property type="match status" value="1"/>
</dbReference>
<dbReference type="PROSITE" id="PS01195">
    <property type="entry name" value="PEPT_TRNA_HYDROL_1"/>
    <property type="match status" value="1"/>
</dbReference>
<accession>Q2NZW9</accession>
<comment type="function">
    <text evidence="1">Hydrolyzes ribosome-free peptidyl-tRNAs (with 1 or more amino acids incorporated), which drop off the ribosome during protein synthesis, or as a result of ribosome stalling.</text>
</comment>
<comment type="function">
    <text evidence="1">Catalyzes the release of premature peptidyl moieties from peptidyl-tRNA molecules trapped in stalled 50S ribosomal subunits, and thus maintains levels of free tRNAs and 50S ribosomes.</text>
</comment>
<comment type="catalytic activity">
    <reaction evidence="1">
        <text>an N-acyl-L-alpha-aminoacyl-tRNA + H2O = an N-acyl-L-amino acid + a tRNA + H(+)</text>
        <dbReference type="Rhea" id="RHEA:54448"/>
        <dbReference type="Rhea" id="RHEA-COMP:10123"/>
        <dbReference type="Rhea" id="RHEA-COMP:13883"/>
        <dbReference type="ChEBI" id="CHEBI:15377"/>
        <dbReference type="ChEBI" id="CHEBI:15378"/>
        <dbReference type="ChEBI" id="CHEBI:59874"/>
        <dbReference type="ChEBI" id="CHEBI:78442"/>
        <dbReference type="ChEBI" id="CHEBI:138191"/>
        <dbReference type="EC" id="3.1.1.29"/>
    </reaction>
</comment>
<comment type="subunit">
    <text evidence="1">Monomer.</text>
</comment>
<comment type="subcellular location">
    <subcellularLocation>
        <location evidence="1">Cytoplasm</location>
    </subcellularLocation>
</comment>
<comment type="similarity">
    <text evidence="1">Belongs to the PTH family.</text>
</comment>
<keyword id="KW-0963">Cytoplasm</keyword>
<keyword id="KW-0378">Hydrolase</keyword>
<keyword id="KW-0694">RNA-binding</keyword>
<keyword id="KW-0820">tRNA-binding</keyword>
<sequence length="194" mass="21038">MSALRLIVGLGNPGQEHAQTRHNAGFRFVDSLIERSGARWALDSKLFGETAKVDIAGQPVWLLKPATFMNLSGKSITAALRFWKIEPEHLLVAHDELDLAPGTARLKFDGGHGGQNGLRDTIGLLGHGKFHRLRVGIGHPGHKDRVVPWVLGRAGREDDAAIGTAIDAAIDVLPLAMEGHFSEAMKRLHTSRDA</sequence>
<evidence type="ECO:0000255" key="1">
    <source>
        <dbReference type="HAMAP-Rule" id="MF_00083"/>
    </source>
</evidence>
<protein>
    <recommendedName>
        <fullName evidence="1">Peptidyl-tRNA hydrolase</fullName>
        <shortName evidence="1">Pth</shortName>
        <ecNumber evidence="1">3.1.1.29</ecNumber>
    </recommendedName>
</protein>
<gene>
    <name evidence="1" type="primary">pth</name>
    <name type="ordered locus">XOO3403</name>
</gene>
<proteinExistence type="inferred from homology"/>
<reference key="1">
    <citation type="journal article" date="2005" name="Jpn. Agric. Res. Q.">
        <title>Genome sequence of Xanthomonas oryzae pv. oryzae suggests contribution of large numbers of effector genes and insertion sequences to its race diversity.</title>
        <authorList>
            <person name="Ochiai H."/>
            <person name="Inoue Y."/>
            <person name="Takeya M."/>
            <person name="Sasaki A."/>
            <person name="Kaku H."/>
        </authorList>
    </citation>
    <scope>NUCLEOTIDE SEQUENCE [LARGE SCALE GENOMIC DNA]</scope>
    <source>
        <strain>MAFF 311018</strain>
    </source>
</reference>
<organism>
    <name type="scientific">Xanthomonas oryzae pv. oryzae (strain MAFF 311018)</name>
    <dbReference type="NCBI Taxonomy" id="342109"/>
    <lineage>
        <taxon>Bacteria</taxon>
        <taxon>Pseudomonadati</taxon>
        <taxon>Pseudomonadota</taxon>
        <taxon>Gammaproteobacteria</taxon>
        <taxon>Lysobacterales</taxon>
        <taxon>Lysobacteraceae</taxon>
        <taxon>Xanthomonas</taxon>
    </lineage>
</organism>
<name>PTH_XANOM</name>
<feature type="chain" id="PRO_0000264138" description="Peptidyl-tRNA hydrolase">
    <location>
        <begin position="1"/>
        <end position="194"/>
    </location>
</feature>
<feature type="active site" description="Proton acceptor" evidence="1">
    <location>
        <position position="22"/>
    </location>
</feature>
<feature type="binding site" evidence="1">
    <location>
        <position position="17"/>
    </location>
    <ligand>
        <name>tRNA</name>
        <dbReference type="ChEBI" id="CHEBI:17843"/>
    </ligand>
</feature>
<feature type="binding site" evidence="1">
    <location>
        <position position="68"/>
    </location>
    <ligand>
        <name>tRNA</name>
        <dbReference type="ChEBI" id="CHEBI:17843"/>
    </ligand>
</feature>
<feature type="binding site" evidence="1">
    <location>
        <position position="70"/>
    </location>
    <ligand>
        <name>tRNA</name>
        <dbReference type="ChEBI" id="CHEBI:17843"/>
    </ligand>
</feature>
<feature type="binding site" evidence="1">
    <location>
        <position position="116"/>
    </location>
    <ligand>
        <name>tRNA</name>
        <dbReference type="ChEBI" id="CHEBI:17843"/>
    </ligand>
</feature>
<feature type="site" description="Discriminates between blocked and unblocked aminoacyl-tRNA" evidence="1">
    <location>
        <position position="12"/>
    </location>
</feature>
<feature type="site" description="Stabilizes the basic form of H active site to accept a proton" evidence="1">
    <location>
        <position position="95"/>
    </location>
</feature>